<accession>Q2JN84</accession>
<reference key="1">
    <citation type="journal article" date="2007" name="ISME J.">
        <title>Population level functional diversity in a microbial community revealed by comparative genomic and metagenomic analyses.</title>
        <authorList>
            <person name="Bhaya D."/>
            <person name="Grossman A.R."/>
            <person name="Steunou A.-S."/>
            <person name="Khuri N."/>
            <person name="Cohan F.M."/>
            <person name="Hamamura N."/>
            <person name="Melendrez M.C."/>
            <person name="Bateson M.M."/>
            <person name="Ward D.M."/>
            <person name="Heidelberg J.F."/>
        </authorList>
    </citation>
    <scope>NUCLEOTIDE SEQUENCE [LARGE SCALE GENOMIC DNA]</scope>
    <source>
        <strain>JA-2-3B'a(2-13)</strain>
    </source>
</reference>
<comment type="function">
    <text evidence="1">Required for H(+) efflux immediately after light irradiation to form a rapid H(+) concentration gradient across the thylakoid membranes. Together with PxcL, contributes to transient H(+) uptake following dark to light transition.</text>
</comment>
<comment type="subcellular location">
    <subcellularLocation>
        <location evidence="1">Cell inner membrane</location>
        <topology evidence="1">Multi-pass membrane protein</topology>
    </subcellularLocation>
</comment>
<comment type="similarity">
    <text evidence="1">Belongs to the CemA family.</text>
</comment>
<feature type="chain" id="PRO_0000293502" description="Proton extrusion protein PxcA">
    <location>
        <begin position="1"/>
        <end position="460"/>
    </location>
</feature>
<feature type="transmembrane region" description="Helical" evidence="1">
    <location>
        <begin position="242"/>
        <end position="262"/>
    </location>
</feature>
<feature type="transmembrane region" description="Helical" evidence="1">
    <location>
        <begin position="337"/>
        <end position="357"/>
    </location>
</feature>
<feature type="transmembrane region" description="Helical" evidence="1">
    <location>
        <begin position="373"/>
        <end position="393"/>
    </location>
</feature>
<feature type="transmembrane region" description="Helical" evidence="1">
    <location>
        <begin position="420"/>
        <end position="440"/>
    </location>
</feature>
<feature type="region of interest" description="Disordered" evidence="2">
    <location>
        <begin position="82"/>
        <end position="128"/>
    </location>
</feature>
<feature type="region of interest" description="Disordered" evidence="2">
    <location>
        <begin position="143"/>
        <end position="190"/>
    </location>
</feature>
<feature type="compositionally biased region" description="Polar residues" evidence="2">
    <location>
        <begin position="90"/>
        <end position="102"/>
    </location>
</feature>
<feature type="compositionally biased region" description="Low complexity" evidence="2">
    <location>
        <begin position="107"/>
        <end position="120"/>
    </location>
</feature>
<feature type="compositionally biased region" description="Polar residues" evidence="2">
    <location>
        <begin position="151"/>
        <end position="163"/>
    </location>
</feature>
<feature type="compositionally biased region" description="Low complexity" evidence="2">
    <location>
        <begin position="171"/>
        <end position="184"/>
    </location>
</feature>
<evidence type="ECO:0000255" key="1">
    <source>
        <dbReference type="HAMAP-Rule" id="MF_01308"/>
    </source>
</evidence>
<evidence type="ECO:0000256" key="2">
    <source>
        <dbReference type="SAM" id="MobiDB-lite"/>
    </source>
</evidence>
<keyword id="KW-0997">Cell inner membrane</keyword>
<keyword id="KW-1003">Cell membrane</keyword>
<keyword id="KW-0375">Hydrogen ion transport</keyword>
<keyword id="KW-0406">Ion transport</keyword>
<keyword id="KW-0472">Membrane</keyword>
<keyword id="KW-1185">Reference proteome</keyword>
<keyword id="KW-0812">Transmembrane</keyword>
<keyword id="KW-1133">Transmembrane helix</keyword>
<keyword id="KW-0813">Transport</keyword>
<dbReference type="EMBL" id="CP000240">
    <property type="protein sequence ID" value="ABD01791.1"/>
    <property type="molecule type" value="Genomic_DNA"/>
</dbReference>
<dbReference type="RefSeq" id="WP_011432448.1">
    <property type="nucleotide sequence ID" value="NC_007776.1"/>
</dbReference>
<dbReference type="SMR" id="Q2JN84"/>
<dbReference type="STRING" id="321332.CYB_0810"/>
<dbReference type="KEGG" id="cyb:CYB_0810"/>
<dbReference type="eggNOG" id="ENOG502Z8DN">
    <property type="taxonomic scope" value="Bacteria"/>
</dbReference>
<dbReference type="HOGENOM" id="CLU_690401_0_0_3"/>
<dbReference type="OrthoDB" id="418298at2"/>
<dbReference type="Proteomes" id="UP000001938">
    <property type="component" value="Chromosome"/>
</dbReference>
<dbReference type="GO" id="GO:0005886">
    <property type="term" value="C:plasma membrane"/>
    <property type="evidence" value="ECO:0007669"/>
    <property type="project" value="UniProtKB-SubCell"/>
</dbReference>
<dbReference type="GO" id="GO:0015078">
    <property type="term" value="F:proton transmembrane transporter activity"/>
    <property type="evidence" value="ECO:0007669"/>
    <property type="project" value="UniProtKB-UniRule"/>
</dbReference>
<dbReference type="HAMAP" id="MF_01308">
    <property type="entry name" value="CemA_PxcA"/>
    <property type="match status" value="1"/>
</dbReference>
<dbReference type="InterPro" id="IPR004282">
    <property type="entry name" value="CemA"/>
</dbReference>
<dbReference type="NCBIfam" id="NF002706">
    <property type="entry name" value="PRK02507.1-5"/>
    <property type="match status" value="1"/>
</dbReference>
<dbReference type="PANTHER" id="PTHR33650:SF2">
    <property type="entry name" value="CHLOROPLAST ENVELOPE MEMBRANE PROTEIN"/>
    <property type="match status" value="1"/>
</dbReference>
<dbReference type="PANTHER" id="PTHR33650">
    <property type="entry name" value="CHLOROPLAST ENVELOPE MEMBRANE PROTEIN-RELATED"/>
    <property type="match status" value="1"/>
</dbReference>
<dbReference type="Pfam" id="PF03040">
    <property type="entry name" value="CemA"/>
    <property type="match status" value="1"/>
</dbReference>
<protein>
    <recommendedName>
        <fullName evidence="1">Proton extrusion protein PxcA</fullName>
    </recommendedName>
</protein>
<organism>
    <name type="scientific">Synechococcus sp. (strain JA-2-3B'a(2-13))</name>
    <name type="common">Cyanobacteria bacterium Yellowstone B-Prime</name>
    <dbReference type="NCBI Taxonomy" id="321332"/>
    <lineage>
        <taxon>Bacteria</taxon>
        <taxon>Bacillati</taxon>
        <taxon>Cyanobacteriota</taxon>
        <taxon>Cyanophyceae</taxon>
        <taxon>Synechococcales</taxon>
        <taxon>Synechococcaceae</taxon>
        <taxon>Synechococcus</taxon>
    </lineage>
</organism>
<gene>
    <name evidence="1" type="primary">pxcA</name>
    <name type="ordered locus">CYB_0810</name>
</gene>
<name>PXCA_SYNJB</name>
<sequence>MGESVLSRLGQWISNTPLRSLDQAYEAALRIKAIEDQYFQGGSIGSNGQHGQNVSRYFQIQLRRQLRQIDLRLAEFRASSAFSRLPDPEQNGSGPTSAQDKAQQLHAAEANVSESSSENSENGRQRRDLSILEKLQFIDQVTSRYKRPTRKSQPISASISTSPEPLERPEQPTSTQPSSSNVSVKAGSGNGAAPVASKAAILPRSILRTASQIRRELSSQAEEELIQEYREARTRTLVSIRFLLLLAILPLLTQILSKNFLFGPLVDHLQQREPAIVALSHEFQEKALTEFEFFKERMEFERALHHQSPEWDLESADQLSMKAEELLKKYSRRNSEGLKNILADLLSLLVFGWLIFVGREEIEVLKSFLDRLIYGLSDSAKAFIIILFTDVFVGYHSPHGWEVLLGNLAAHLGVPENRDFIYGFIATFPVFLDTLFKYWIFRYLNRVSPSSVATYRAMND</sequence>
<proteinExistence type="inferred from homology"/>